<proteinExistence type="inferred from homology"/>
<keyword id="KW-0131">Cell cycle</keyword>
<keyword id="KW-0132">Cell division</keyword>
<keyword id="KW-0143">Chaperone</keyword>
<keyword id="KW-0963">Cytoplasm</keyword>
<keyword id="KW-0413">Isomerase</keyword>
<keyword id="KW-1185">Reference proteome</keyword>
<keyword id="KW-0697">Rotamase</keyword>
<protein>
    <recommendedName>
        <fullName evidence="1">Trigger factor</fullName>
        <shortName evidence="1">TF</shortName>
        <ecNumber evidence="1">5.2.1.8</ecNumber>
    </recommendedName>
    <alternativeName>
        <fullName evidence="1">PPIase</fullName>
    </alternativeName>
</protein>
<sequence>MGVSLKKLEKSVATIELTIPSEKFEEGLNFAFKKNASKFNVPGFRRGKAPRVIVERYYGEGVLYEDAVEYVFDEAYKEALKTFNLEPVDYPDINILQIGKGKDLILEATVPVMPEVELGEYKGIEIEKIEYNVYDGDVEYELEKLRQQNARIVPVEGRPAESGDIAVIDFEGFIDGKPFEGGKAENYELELGSNTFIPGFEDQIIGHNVNETFDVNITFPEDYRVEELRGKSAVFKVTLKALNKKELPELDDEFAKDVSEFETLDELKADIRKKLEEKNRVEAENEMKEKAVMKVVENAKVDIPDVMVERQIDISLRDLDYNLRYQGLDLNSYLSITGKTLENLRKEMWDGALNRVKTQLVIDKIAKVENIEVTEEELENKLKEMAANYRINLEEFKKSLTESQINSIKEDIAYYKTIDFIFSKCKIISKEE</sequence>
<reference key="1">
    <citation type="submission" date="2008-01" db="EMBL/GenBank/DDBJ databases">
        <title>Complete sequence of Thermoanaerobacter pseudethanolicus 39E.</title>
        <authorList>
            <person name="Copeland A."/>
            <person name="Lucas S."/>
            <person name="Lapidus A."/>
            <person name="Barry K."/>
            <person name="Glavina del Rio T."/>
            <person name="Dalin E."/>
            <person name="Tice H."/>
            <person name="Pitluck S."/>
            <person name="Bruce D."/>
            <person name="Goodwin L."/>
            <person name="Saunders E."/>
            <person name="Brettin T."/>
            <person name="Detter J.C."/>
            <person name="Han C."/>
            <person name="Schmutz J."/>
            <person name="Larimer F."/>
            <person name="Land M."/>
            <person name="Hauser L."/>
            <person name="Kyrpides N."/>
            <person name="Lykidis A."/>
            <person name="Hemme C."/>
            <person name="Fields M.W."/>
            <person name="He Z."/>
            <person name="Zhou J."/>
            <person name="Richardson P."/>
        </authorList>
    </citation>
    <scope>NUCLEOTIDE SEQUENCE [LARGE SCALE GENOMIC DNA]</scope>
    <source>
        <strain>ATCC 33223 / DSM 2355 / 39E</strain>
    </source>
</reference>
<comment type="function">
    <text evidence="1">Involved in protein export. Acts as a chaperone by maintaining the newly synthesized protein in an open conformation. Functions as a peptidyl-prolyl cis-trans isomerase.</text>
</comment>
<comment type="catalytic activity">
    <reaction evidence="1">
        <text>[protein]-peptidylproline (omega=180) = [protein]-peptidylproline (omega=0)</text>
        <dbReference type="Rhea" id="RHEA:16237"/>
        <dbReference type="Rhea" id="RHEA-COMP:10747"/>
        <dbReference type="Rhea" id="RHEA-COMP:10748"/>
        <dbReference type="ChEBI" id="CHEBI:83833"/>
        <dbReference type="ChEBI" id="CHEBI:83834"/>
        <dbReference type="EC" id="5.2.1.8"/>
    </reaction>
</comment>
<comment type="subcellular location">
    <subcellularLocation>
        <location>Cytoplasm</location>
    </subcellularLocation>
    <text evidence="1">About half TF is bound to the ribosome near the polypeptide exit tunnel while the other half is free in the cytoplasm.</text>
</comment>
<comment type="domain">
    <text evidence="1">Consists of 3 domains; the N-terminus binds the ribosome, the middle domain has PPIase activity, while the C-terminus has intrinsic chaperone activity on its own.</text>
</comment>
<comment type="similarity">
    <text evidence="1">Belongs to the FKBP-type PPIase family. Tig subfamily.</text>
</comment>
<feature type="chain" id="PRO_1000115592" description="Trigger factor">
    <location>
        <begin position="1"/>
        <end position="432"/>
    </location>
</feature>
<feature type="domain" description="PPIase FKBP-type" evidence="1">
    <location>
        <begin position="163"/>
        <end position="248"/>
    </location>
</feature>
<accession>B0KBA5</accession>
<evidence type="ECO:0000255" key="1">
    <source>
        <dbReference type="HAMAP-Rule" id="MF_00303"/>
    </source>
</evidence>
<gene>
    <name evidence="1" type="primary">tig</name>
    <name type="ordered locus">Teth39_1652</name>
</gene>
<name>TIG_THEP3</name>
<dbReference type="EC" id="5.2.1.8" evidence="1"/>
<dbReference type="EMBL" id="CP000924">
    <property type="protein sequence ID" value="ABY95293.1"/>
    <property type="molecule type" value="Genomic_DNA"/>
</dbReference>
<dbReference type="RefSeq" id="WP_009052705.1">
    <property type="nucleotide sequence ID" value="NC_010321.1"/>
</dbReference>
<dbReference type="SMR" id="B0KBA5"/>
<dbReference type="STRING" id="340099.Teth39_1652"/>
<dbReference type="KEGG" id="tpd:Teth39_1652"/>
<dbReference type="eggNOG" id="COG0544">
    <property type="taxonomic scope" value="Bacteria"/>
</dbReference>
<dbReference type="HOGENOM" id="CLU_033058_3_2_9"/>
<dbReference type="Proteomes" id="UP000002156">
    <property type="component" value="Chromosome"/>
</dbReference>
<dbReference type="GO" id="GO:0005737">
    <property type="term" value="C:cytoplasm"/>
    <property type="evidence" value="ECO:0007669"/>
    <property type="project" value="UniProtKB-SubCell"/>
</dbReference>
<dbReference type="GO" id="GO:0003755">
    <property type="term" value="F:peptidyl-prolyl cis-trans isomerase activity"/>
    <property type="evidence" value="ECO:0007669"/>
    <property type="project" value="UniProtKB-UniRule"/>
</dbReference>
<dbReference type="GO" id="GO:0044183">
    <property type="term" value="F:protein folding chaperone"/>
    <property type="evidence" value="ECO:0007669"/>
    <property type="project" value="TreeGrafter"/>
</dbReference>
<dbReference type="GO" id="GO:0043022">
    <property type="term" value="F:ribosome binding"/>
    <property type="evidence" value="ECO:0007669"/>
    <property type="project" value="TreeGrafter"/>
</dbReference>
<dbReference type="GO" id="GO:0051083">
    <property type="term" value="P:'de novo' cotranslational protein folding"/>
    <property type="evidence" value="ECO:0007669"/>
    <property type="project" value="TreeGrafter"/>
</dbReference>
<dbReference type="GO" id="GO:0051301">
    <property type="term" value="P:cell division"/>
    <property type="evidence" value="ECO:0007669"/>
    <property type="project" value="UniProtKB-KW"/>
</dbReference>
<dbReference type="GO" id="GO:0061077">
    <property type="term" value="P:chaperone-mediated protein folding"/>
    <property type="evidence" value="ECO:0007669"/>
    <property type="project" value="TreeGrafter"/>
</dbReference>
<dbReference type="GO" id="GO:0015031">
    <property type="term" value="P:protein transport"/>
    <property type="evidence" value="ECO:0007669"/>
    <property type="project" value="UniProtKB-UniRule"/>
</dbReference>
<dbReference type="GO" id="GO:0043335">
    <property type="term" value="P:protein unfolding"/>
    <property type="evidence" value="ECO:0007669"/>
    <property type="project" value="TreeGrafter"/>
</dbReference>
<dbReference type="FunFam" id="3.10.50.40:FF:000001">
    <property type="entry name" value="Trigger factor"/>
    <property type="match status" value="1"/>
</dbReference>
<dbReference type="Gene3D" id="3.10.50.40">
    <property type="match status" value="1"/>
</dbReference>
<dbReference type="Gene3D" id="3.30.70.1050">
    <property type="entry name" value="Trigger factor ribosome-binding domain"/>
    <property type="match status" value="1"/>
</dbReference>
<dbReference type="Gene3D" id="1.10.3120.10">
    <property type="entry name" value="Trigger factor, C-terminal domain"/>
    <property type="match status" value="1"/>
</dbReference>
<dbReference type="HAMAP" id="MF_00303">
    <property type="entry name" value="Trigger_factor_Tig"/>
    <property type="match status" value="1"/>
</dbReference>
<dbReference type="InterPro" id="IPR046357">
    <property type="entry name" value="PPIase_dom_sf"/>
</dbReference>
<dbReference type="InterPro" id="IPR001179">
    <property type="entry name" value="PPIase_FKBP_dom"/>
</dbReference>
<dbReference type="InterPro" id="IPR005215">
    <property type="entry name" value="Trig_fac"/>
</dbReference>
<dbReference type="InterPro" id="IPR008880">
    <property type="entry name" value="Trigger_fac_C"/>
</dbReference>
<dbReference type="InterPro" id="IPR037041">
    <property type="entry name" value="Trigger_fac_C_sf"/>
</dbReference>
<dbReference type="InterPro" id="IPR008881">
    <property type="entry name" value="Trigger_fac_ribosome-bd_bac"/>
</dbReference>
<dbReference type="InterPro" id="IPR036611">
    <property type="entry name" value="Trigger_fac_ribosome-bd_sf"/>
</dbReference>
<dbReference type="InterPro" id="IPR027304">
    <property type="entry name" value="Trigger_fact/SurA_dom_sf"/>
</dbReference>
<dbReference type="NCBIfam" id="TIGR00115">
    <property type="entry name" value="tig"/>
    <property type="match status" value="1"/>
</dbReference>
<dbReference type="PANTHER" id="PTHR30560">
    <property type="entry name" value="TRIGGER FACTOR CHAPERONE AND PEPTIDYL-PROLYL CIS/TRANS ISOMERASE"/>
    <property type="match status" value="1"/>
</dbReference>
<dbReference type="PANTHER" id="PTHR30560:SF3">
    <property type="entry name" value="TRIGGER FACTOR-LIKE PROTEIN TIG, CHLOROPLASTIC"/>
    <property type="match status" value="1"/>
</dbReference>
<dbReference type="Pfam" id="PF00254">
    <property type="entry name" value="FKBP_C"/>
    <property type="match status" value="1"/>
</dbReference>
<dbReference type="Pfam" id="PF05698">
    <property type="entry name" value="Trigger_C"/>
    <property type="match status" value="1"/>
</dbReference>
<dbReference type="Pfam" id="PF05697">
    <property type="entry name" value="Trigger_N"/>
    <property type="match status" value="1"/>
</dbReference>
<dbReference type="PIRSF" id="PIRSF003095">
    <property type="entry name" value="Trigger_factor"/>
    <property type="match status" value="1"/>
</dbReference>
<dbReference type="SUPFAM" id="SSF54534">
    <property type="entry name" value="FKBP-like"/>
    <property type="match status" value="1"/>
</dbReference>
<dbReference type="SUPFAM" id="SSF109998">
    <property type="entry name" value="Triger factor/SurA peptide-binding domain-like"/>
    <property type="match status" value="1"/>
</dbReference>
<dbReference type="SUPFAM" id="SSF102735">
    <property type="entry name" value="Trigger factor ribosome-binding domain"/>
    <property type="match status" value="1"/>
</dbReference>
<dbReference type="PROSITE" id="PS50059">
    <property type="entry name" value="FKBP_PPIASE"/>
    <property type="match status" value="1"/>
</dbReference>
<organism>
    <name type="scientific">Thermoanaerobacter pseudethanolicus (strain ATCC 33223 / 39E)</name>
    <name type="common">Clostridium thermohydrosulfuricum</name>
    <dbReference type="NCBI Taxonomy" id="340099"/>
    <lineage>
        <taxon>Bacteria</taxon>
        <taxon>Bacillati</taxon>
        <taxon>Bacillota</taxon>
        <taxon>Clostridia</taxon>
        <taxon>Thermoanaerobacterales</taxon>
        <taxon>Thermoanaerobacteraceae</taxon>
        <taxon>Thermoanaerobacter</taxon>
    </lineage>
</organism>